<sequence length="197" mass="21565">MAPKKPEPKKEAAKPAPAPAPAPAPAPAPAPEAPKEPAFDPKSVKIDFTADQIEEFKEAFSLFDRTPTGEMKITYGQCGDVLRALGQNPTNAEVLRVLGKPKPEEMNVKMLDFETFLPILQHISRNKEQGTYEDFVEGLRVFDKESNGTVMGAELRHVLATLGEKMTEAEVEQLLAGQEDANGCINYEAFVKHIMSG</sequence>
<protein>
    <recommendedName>
        <fullName>Myosin light chain 4</fullName>
    </recommendedName>
    <alternativeName>
        <fullName>Myosin light chain 1, embryonic muscle/atrial isoform</fullName>
    </alternativeName>
    <alternativeName>
        <fullName>Myosin light chain alkali GT-1 isoform</fullName>
    </alternativeName>
</protein>
<reference key="1">
    <citation type="journal article" date="1988" name="Eur. J. Biochem.">
        <title>A novel human myosin alkali light chain is developmentally regulated. Expression in fetal cardiac and skeletal muscle and in adult atria.</title>
        <authorList>
            <person name="Arnold H.H."/>
            <person name="Lohse P."/>
            <person name="Seidel U."/>
            <person name="Bober E."/>
        </authorList>
    </citation>
    <scope>NUCLEOTIDE SEQUENCE [MRNA]</scope>
    <source>
        <tissue>Skeletal muscle</tissue>
    </source>
</reference>
<reference key="2">
    <citation type="journal article" date="1988" name="J. Biol. Chem.">
        <title>Molecular cloning and characterization of human atrial and ventricular myosin alkali light chain cDNA clones.</title>
        <authorList>
            <person name="Kurabayashi M."/>
            <person name="Komuro I."/>
            <person name="Tsuchimochi H."/>
            <person name="Takaku F."/>
            <person name="Yazaki Y."/>
        </authorList>
    </citation>
    <scope>NUCLEOTIDE SEQUENCE [MRNA]</scope>
</reference>
<reference key="3">
    <citation type="journal article" date="1990" name="Genomics">
        <title>Human embryonic/atrial myosin alkali light chain gene: characterization, sequence, and chromosomal location.</title>
        <authorList>
            <person name="Seharaseyon J."/>
            <person name="Bober E."/>
            <person name="Hsieh C.L."/>
            <person name="Fodor W.L."/>
            <person name="Francke U."/>
            <person name="Arnold H.H."/>
            <person name="Vanin E.F."/>
        </authorList>
    </citation>
    <scope>NUCLEOTIDE SEQUENCE [GENOMIC DNA]</scope>
</reference>
<reference key="4">
    <citation type="journal article" date="1990" name="J. Mol. Biol.">
        <title>Heterogenic mRNAs with an identical protein-coding region of the human embryonic myosin alkali light chain in skeletal muscle cells.</title>
        <authorList>
            <person name="Zimmermann K."/>
            <person name="Kautz S."/>
            <person name="Hajdu G."/>
            <person name="Winter C."/>
            <person name="Whalen R.G."/>
            <person name="Starzinski-Powitz A."/>
        </authorList>
    </citation>
    <scope>NUCLEOTIDE SEQUENCE [MRNA]</scope>
</reference>
<reference key="5">
    <citation type="journal article" date="1991" name="Nucleic Acids Res.">
        <title>The human embryonic myosin alkali light chain gene: use of alternative promoters and 3' non-coding regions.</title>
        <authorList>
            <person name="Rotter M."/>
            <person name="Zimmerman K."/>
            <person name="Poustka A."/>
            <person name="Starzinski-Powitz A."/>
        </authorList>
    </citation>
    <scope>NUCLEOTIDE SEQUENCE [GENOMIC DNA]</scope>
    <source>
        <tissue>Blood</tissue>
    </source>
</reference>
<reference key="6">
    <citation type="submission" date="1998-12" db="EMBL/GenBank/DDBJ databases">
        <title>Functional prediction of the coding sequences of 121 new genes deduced by analysis of cDNA clones from human fetal liver.</title>
        <authorList>
            <person name="Zhang C."/>
            <person name="Yu Y."/>
            <person name="Zhang S."/>
            <person name="Wei H."/>
            <person name="Zhou G."/>
            <person name="Ouyang S."/>
            <person name="Luo L."/>
            <person name="Bi J."/>
            <person name="Liu M."/>
            <person name="He F."/>
        </authorList>
    </citation>
    <scope>NUCLEOTIDE SEQUENCE [LARGE SCALE MRNA]</scope>
    <source>
        <tissue>Fetal liver</tissue>
    </source>
</reference>
<reference key="7">
    <citation type="submission" date="2005-09" db="EMBL/GenBank/DDBJ databases">
        <authorList>
            <person name="Mural R.J."/>
            <person name="Istrail S."/>
            <person name="Sutton G.G."/>
            <person name="Florea L."/>
            <person name="Halpern A.L."/>
            <person name="Mobarry C.M."/>
            <person name="Lippert R."/>
            <person name="Walenz B."/>
            <person name="Shatkay H."/>
            <person name="Dew I."/>
            <person name="Miller J.R."/>
            <person name="Flanigan M.J."/>
            <person name="Edwards N.J."/>
            <person name="Bolanos R."/>
            <person name="Fasulo D."/>
            <person name="Halldorsson B.V."/>
            <person name="Hannenhalli S."/>
            <person name="Turner R."/>
            <person name="Yooseph S."/>
            <person name="Lu F."/>
            <person name="Nusskern D.R."/>
            <person name="Shue B.C."/>
            <person name="Zheng X.H."/>
            <person name="Zhong F."/>
            <person name="Delcher A.L."/>
            <person name="Huson D.H."/>
            <person name="Kravitz S.A."/>
            <person name="Mouchard L."/>
            <person name="Reinert K."/>
            <person name="Remington K.A."/>
            <person name="Clark A.G."/>
            <person name="Waterman M.S."/>
            <person name="Eichler E.E."/>
            <person name="Adams M.D."/>
            <person name="Hunkapiller M.W."/>
            <person name="Myers E.W."/>
            <person name="Venter J.C."/>
        </authorList>
    </citation>
    <scope>NUCLEOTIDE SEQUENCE [LARGE SCALE GENOMIC DNA]</scope>
</reference>
<reference key="8">
    <citation type="journal article" date="2004" name="Genome Res.">
        <title>The status, quality, and expansion of the NIH full-length cDNA project: the Mammalian Gene Collection (MGC).</title>
        <authorList>
            <consortium name="The MGC Project Team"/>
        </authorList>
    </citation>
    <scope>NUCLEOTIDE SEQUENCE [LARGE SCALE MRNA]</scope>
    <source>
        <tissue>Pancreas</tissue>
        <tissue>Spleen</tissue>
    </source>
</reference>
<reference key="9">
    <citation type="journal article" date="1988" name="Gene">
        <title>Alkali myosin light chains in man are encoded by a multigene family that includes the adult skeletal muscle, the embryonic or atrial, and nonsarcomeric isoforms.</title>
        <authorList>
            <person name="Seidel U."/>
            <person name="Bober E."/>
            <person name="Winter B."/>
            <person name="Lenz S."/>
            <person name="Lohse P."/>
            <person name="Goedde H."/>
            <person name="Grzeschik K."/>
            <person name="Arnold H.H."/>
        </authorList>
    </citation>
    <scope>NUCLEOTIDE SEQUENCE [MRNA] OF 104-197</scope>
</reference>
<reference key="10">
    <citation type="journal article" date="2011" name="BMC Syst. Biol.">
        <title>Initial characterization of the human central proteome.</title>
        <authorList>
            <person name="Burkard T.R."/>
            <person name="Planyavsky M."/>
            <person name="Kaupe I."/>
            <person name="Breitwieser F.P."/>
            <person name="Buerckstuemmer T."/>
            <person name="Bennett K.L."/>
            <person name="Superti-Furga G."/>
            <person name="Colinge J."/>
        </authorList>
    </citation>
    <scope>IDENTIFICATION BY MASS SPECTROMETRY [LARGE SCALE ANALYSIS]</scope>
</reference>
<reference key="11">
    <citation type="journal article" date="2016" name="Nat. Commun.">
        <title>A mutation in the atrial-specific myosin light chain gene (MYL4) causes familial atrial fibrillation.</title>
        <authorList>
            <person name="Orr N."/>
            <person name="Arnaout R."/>
            <person name="Gula L.J."/>
            <person name="Spears D.A."/>
            <person name="Leong-Sit P."/>
            <person name="Li Q."/>
            <person name="Tarhuni W."/>
            <person name="Reischauer S."/>
            <person name="Chauhan V.S."/>
            <person name="Borkovich M."/>
            <person name="Uppal S."/>
            <person name="Adler A."/>
            <person name="Coughlin S.R."/>
            <person name="Stainier D.Y."/>
            <person name="Gollob M.H."/>
        </authorList>
    </citation>
    <scope>VARIANT ATFB18 LYS-11</scope>
    <scope>INVOLVEMENT IN ATFB18</scope>
</reference>
<dbReference type="EMBL" id="M36172">
    <property type="protein sequence ID" value="AAA36319.1"/>
    <property type="molecule type" value="mRNA"/>
</dbReference>
<dbReference type="EMBL" id="X13955">
    <property type="protein sequence ID" value="CAA32137.1"/>
    <property type="molecule type" value="mRNA"/>
</dbReference>
<dbReference type="EMBL" id="M24121">
    <property type="protein sequence ID" value="AAA59891.1"/>
    <property type="molecule type" value="mRNA"/>
</dbReference>
<dbReference type="EMBL" id="M37074">
    <property type="protein sequence ID" value="AAA59858.1"/>
    <property type="molecule type" value="Genomic_DNA"/>
</dbReference>
<dbReference type="EMBL" id="M37069">
    <property type="protein sequence ID" value="AAA59858.1"/>
    <property type="status" value="JOINED"/>
    <property type="molecule type" value="Genomic_DNA"/>
</dbReference>
<dbReference type="EMBL" id="M37070">
    <property type="protein sequence ID" value="AAA59858.1"/>
    <property type="status" value="JOINED"/>
    <property type="molecule type" value="Genomic_DNA"/>
</dbReference>
<dbReference type="EMBL" id="M37071">
    <property type="protein sequence ID" value="AAA59858.1"/>
    <property type="status" value="JOINED"/>
    <property type="molecule type" value="Genomic_DNA"/>
</dbReference>
<dbReference type="EMBL" id="M37072">
    <property type="protein sequence ID" value="AAA59858.1"/>
    <property type="status" value="JOINED"/>
    <property type="molecule type" value="Genomic_DNA"/>
</dbReference>
<dbReference type="EMBL" id="M37073">
    <property type="protein sequence ID" value="AAA59858.1"/>
    <property type="status" value="JOINED"/>
    <property type="molecule type" value="Genomic_DNA"/>
</dbReference>
<dbReference type="EMBL" id="X58851">
    <property type="protein sequence ID" value="CAA41655.1"/>
    <property type="molecule type" value="Genomic_DNA"/>
</dbReference>
<dbReference type="EMBL" id="X58852">
    <property type="protein sequence ID" value="CAA41655.1"/>
    <property type="status" value="JOINED"/>
    <property type="molecule type" value="Genomic_DNA"/>
</dbReference>
<dbReference type="EMBL" id="X58853">
    <property type="protein sequence ID" value="CAA41655.1"/>
    <property type="status" value="JOINED"/>
    <property type="molecule type" value="Genomic_DNA"/>
</dbReference>
<dbReference type="EMBL" id="X58854">
    <property type="protein sequence ID" value="CAA41655.1"/>
    <property type="status" value="JOINED"/>
    <property type="molecule type" value="Genomic_DNA"/>
</dbReference>
<dbReference type="EMBL" id="AF116676">
    <property type="protein sequence ID" value="AAF71096.1"/>
    <property type="molecule type" value="mRNA"/>
</dbReference>
<dbReference type="EMBL" id="CH471231">
    <property type="protein sequence ID" value="EAW57684.1"/>
    <property type="molecule type" value="Genomic_DNA"/>
</dbReference>
<dbReference type="EMBL" id="CH471231">
    <property type="protein sequence ID" value="EAW57685.1"/>
    <property type="molecule type" value="Genomic_DNA"/>
</dbReference>
<dbReference type="EMBL" id="BC030228">
    <property type="protein sequence ID" value="AAH30228.1"/>
    <property type="molecule type" value="mRNA"/>
</dbReference>
<dbReference type="EMBL" id="M20641">
    <property type="protein sequence ID" value="AAA59856.1"/>
    <property type="molecule type" value="mRNA"/>
</dbReference>
<dbReference type="CCDS" id="CCDS11510.1"/>
<dbReference type="PIR" id="A32730">
    <property type="entry name" value="MOHU4E"/>
</dbReference>
<dbReference type="RefSeq" id="NP_001002841.1">
    <property type="nucleotide sequence ID" value="NM_001002841.2"/>
</dbReference>
<dbReference type="RefSeq" id="NP_002467.1">
    <property type="nucleotide sequence ID" value="NM_002476.2"/>
</dbReference>
<dbReference type="RefSeq" id="XP_005257448.1">
    <property type="nucleotide sequence ID" value="XM_005257391.6"/>
</dbReference>
<dbReference type="RefSeq" id="XP_054172216.1">
    <property type="nucleotide sequence ID" value="XM_054316241.1"/>
</dbReference>
<dbReference type="SMR" id="P12829"/>
<dbReference type="BioGRID" id="110719">
    <property type="interactions" value="34"/>
</dbReference>
<dbReference type="FunCoup" id="P12829">
    <property type="interactions" value="518"/>
</dbReference>
<dbReference type="IntAct" id="P12829">
    <property type="interactions" value="21"/>
</dbReference>
<dbReference type="STRING" id="9606.ENSP00000347055"/>
<dbReference type="ChEMBL" id="CHEMBL3831286"/>
<dbReference type="iPTMnet" id="P12829"/>
<dbReference type="PhosphoSitePlus" id="P12829"/>
<dbReference type="SwissPalm" id="P12829"/>
<dbReference type="BioMuta" id="MYL4"/>
<dbReference type="DMDM" id="127138"/>
<dbReference type="jPOST" id="P12829"/>
<dbReference type="MassIVE" id="P12829"/>
<dbReference type="PaxDb" id="9606-ENSP00000347055"/>
<dbReference type="PeptideAtlas" id="P12829"/>
<dbReference type="ProteomicsDB" id="52878"/>
<dbReference type="Pumba" id="P12829"/>
<dbReference type="Antibodypedia" id="30134">
    <property type="antibodies" value="314 antibodies from 30 providers"/>
</dbReference>
<dbReference type="DNASU" id="4635"/>
<dbReference type="Ensembl" id="ENST00000354968.5">
    <property type="protein sequence ID" value="ENSP00000347055.1"/>
    <property type="gene ID" value="ENSG00000198336.9"/>
</dbReference>
<dbReference type="Ensembl" id="ENST00000393450.5">
    <property type="protein sequence ID" value="ENSP00000377096.1"/>
    <property type="gene ID" value="ENSG00000198336.9"/>
</dbReference>
<dbReference type="Ensembl" id="ENST00000572316.5">
    <property type="protein sequence ID" value="ENSP00000461570.1"/>
    <property type="gene ID" value="ENSG00000198336.9"/>
</dbReference>
<dbReference type="GeneID" id="4635"/>
<dbReference type="KEGG" id="hsa:4635"/>
<dbReference type="MANE-Select" id="ENST00000393450.5">
    <property type="protein sequence ID" value="ENSP00000377096.1"/>
    <property type="RefSeq nucleotide sequence ID" value="NM_002476.2"/>
    <property type="RefSeq protein sequence ID" value="NP_002467.1"/>
</dbReference>
<dbReference type="UCSC" id="uc002ilg.4">
    <property type="organism name" value="human"/>
</dbReference>
<dbReference type="AGR" id="HGNC:7585"/>
<dbReference type="CTD" id="4635"/>
<dbReference type="DisGeNET" id="4635"/>
<dbReference type="GeneCards" id="MYL4"/>
<dbReference type="HGNC" id="HGNC:7585">
    <property type="gene designation" value="MYL4"/>
</dbReference>
<dbReference type="HPA" id="ENSG00000198336">
    <property type="expression patterns" value="Tissue enriched (heart)"/>
</dbReference>
<dbReference type="MalaCards" id="MYL4"/>
<dbReference type="MIM" id="160770">
    <property type="type" value="gene"/>
</dbReference>
<dbReference type="MIM" id="617280">
    <property type="type" value="phenotype"/>
</dbReference>
<dbReference type="neXtProt" id="NX_P12829"/>
<dbReference type="OpenTargets" id="ENSG00000198336"/>
<dbReference type="Orphanet" id="334">
    <property type="disease" value="Familial atrial fibrillation"/>
</dbReference>
<dbReference type="PharmGKB" id="PA31382"/>
<dbReference type="VEuPathDB" id="HostDB:ENSG00000198336"/>
<dbReference type="eggNOG" id="KOG0030">
    <property type="taxonomic scope" value="Eukaryota"/>
</dbReference>
<dbReference type="GeneTree" id="ENSGT01030000234570"/>
<dbReference type="InParanoid" id="P12829"/>
<dbReference type="OMA" id="PMFQHIA"/>
<dbReference type="OrthoDB" id="5959761at2759"/>
<dbReference type="PAN-GO" id="P12829">
    <property type="GO annotations" value="4 GO annotations based on evolutionary models"/>
</dbReference>
<dbReference type="PhylomeDB" id="P12829"/>
<dbReference type="TreeFam" id="TF351553"/>
<dbReference type="PathwayCommons" id="P12829"/>
<dbReference type="Reactome" id="R-HSA-390522">
    <property type="pathway name" value="Striated Muscle Contraction"/>
</dbReference>
<dbReference type="SignaLink" id="P12829"/>
<dbReference type="SIGNOR" id="P12829"/>
<dbReference type="BioGRID-ORCS" id="4635">
    <property type="hits" value="14 hits in 1151 CRISPR screens"/>
</dbReference>
<dbReference type="ChiTaRS" id="MYL4">
    <property type="organism name" value="human"/>
</dbReference>
<dbReference type="GeneWiki" id="MYL4"/>
<dbReference type="GenomeRNAi" id="4635"/>
<dbReference type="Pharos" id="P12829">
    <property type="development level" value="Tbio"/>
</dbReference>
<dbReference type="PRO" id="PR:P12829"/>
<dbReference type="Proteomes" id="UP000005640">
    <property type="component" value="Chromosome 17"/>
</dbReference>
<dbReference type="RNAct" id="P12829">
    <property type="molecule type" value="protein"/>
</dbReference>
<dbReference type="Bgee" id="ENSG00000198336">
    <property type="expression patterns" value="Expressed in right atrium auricular region and 120 other cell types or tissues"/>
</dbReference>
<dbReference type="ExpressionAtlas" id="P12829">
    <property type="expression patterns" value="baseline and differential"/>
</dbReference>
<dbReference type="GO" id="GO:0031672">
    <property type="term" value="C:A band"/>
    <property type="evidence" value="ECO:0000315"/>
    <property type="project" value="BHF-UCL"/>
</dbReference>
<dbReference type="GO" id="GO:0005829">
    <property type="term" value="C:cytosol"/>
    <property type="evidence" value="ECO:0000304"/>
    <property type="project" value="Reactome"/>
</dbReference>
<dbReference type="GO" id="GO:0016460">
    <property type="term" value="C:myosin II complex"/>
    <property type="evidence" value="ECO:0000318"/>
    <property type="project" value="GO_Central"/>
</dbReference>
<dbReference type="GO" id="GO:0051015">
    <property type="term" value="F:actin filament binding"/>
    <property type="evidence" value="ECO:0000315"/>
    <property type="project" value="BHF-UCL"/>
</dbReference>
<dbReference type="GO" id="GO:0003785">
    <property type="term" value="F:actin monomer binding"/>
    <property type="evidence" value="ECO:0000314"/>
    <property type="project" value="BHF-UCL"/>
</dbReference>
<dbReference type="GO" id="GO:0005509">
    <property type="term" value="F:calcium ion binding"/>
    <property type="evidence" value="ECO:0007669"/>
    <property type="project" value="InterPro"/>
</dbReference>
<dbReference type="GO" id="GO:0032038">
    <property type="term" value="F:myosin II heavy chain binding"/>
    <property type="evidence" value="ECO:0000303"/>
    <property type="project" value="BHF-UCL"/>
</dbReference>
<dbReference type="GO" id="GO:0060048">
    <property type="term" value="P:cardiac muscle contraction"/>
    <property type="evidence" value="ECO:0000315"/>
    <property type="project" value="BHF-UCL"/>
</dbReference>
<dbReference type="GO" id="GO:0032781">
    <property type="term" value="P:positive regulation of ATP-dependent activity"/>
    <property type="evidence" value="ECO:0000315"/>
    <property type="project" value="BHF-UCL"/>
</dbReference>
<dbReference type="GO" id="GO:0002026">
    <property type="term" value="P:regulation of the force of heart contraction"/>
    <property type="evidence" value="ECO:0000315"/>
    <property type="project" value="BHF-UCL"/>
</dbReference>
<dbReference type="CDD" id="cd00051">
    <property type="entry name" value="EFh"/>
    <property type="match status" value="1"/>
</dbReference>
<dbReference type="FunFam" id="1.10.238.10:FF:000019">
    <property type="entry name" value="Myosin light chain 1 skeletal"/>
    <property type="match status" value="1"/>
</dbReference>
<dbReference type="FunFam" id="1.10.238.10:FF:000056">
    <property type="entry name" value="Myosin light chain 1 skeletal"/>
    <property type="match status" value="1"/>
</dbReference>
<dbReference type="Gene3D" id="1.10.238.10">
    <property type="entry name" value="EF-hand"/>
    <property type="match status" value="2"/>
</dbReference>
<dbReference type="InterPro" id="IPR050230">
    <property type="entry name" value="CALM/Myosin/TropC-like"/>
</dbReference>
<dbReference type="InterPro" id="IPR011992">
    <property type="entry name" value="EF-hand-dom_pair"/>
</dbReference>
<dbReference type="InterPro" id="IPR002048">
    <property type="entry name" value="EF_hand_dom"/>
</dbReference>
<dbReference type="PANTHER" id="PTHR23048">
    <property type="entry name" value="MYOSIN LIGHT CHAIN 1, 3"/>
    <property type="match status" value="1"/>
</dbReference>
<dbReference type="PANTHER" id="PTHR23048:SF1">
    <property type="entry name" value="MYOSIN LIGHT CHAIN 4"/>
    <property type="match status" value="1"/>
</dbReference>
<dbReference type="SUPFAM" id="SSF47473">
    <property type="entry name" value="EF-hand"/>
    <property type="match status" value="1"/>
</dbReference>
<dbReference type="PROSITE" id="PS50222">
    <property type="entry name" value="EF_HAND_2"/>
    <property type="match status" value="2"/>
</dbReference>
<keyword id="KW-1020">Atrial fibrillation</keyword>
<keyword id="KW-0225">Disease variant</keyword>
<keyword id="KW-0488">Methylation</keyword>
<keyword id="KW-0505">Motor protein</keyword>
<keyword id="KW-0514">Muscle protein</keyword>
<keyword id="KW-0518">Myosin</keyword>
<keyword id="KW-1267">Proteomics identification</keyword>
<keyword id="KW-1185">Reference proteome</keyword>
<keyword id="KW-0677">Repeat</keyword>
<feature type="initiator methionine" description="Removed" evidence="1">
    <location>
        <position position="1"/>
    </location>
</feature>
<feature type="chain" id="PRO_0000198699" description="Myosin light chain 4">
    <location>
        <begin position="2"/>
        <end position="197"/>
    </location>
</feature>
<feature type="domain" description="EF-hand 1" evidence="2">
    <location>
        <begin position="51"/>
        <end position="88"/>
    </location>
</feature>
<feature type="domain" description="EF-hand 2" evidence="2">
    <location>
        <begin position="130"/>
        <end position="165"/>
    </location>
</feature>
<feature type="region of interest" description="Disordered" evidence="3">
    <location>
        <begin position="1"/>
        <end position="42"/>
    </location>
</feature>
<feature type="compositionally biased region" description="Basic and acidic residues" evidence="3">
    <location>
        <begin position="1"/>
        <end position="13"/>
    </location>
</feature>
<feature type="compositionally biased region" description="Pro residues" evidence="3">
    <location>
        <begin position="16"/>
        <end position="32"/>
    </location>
</feature>
<feature type="compositionally biased region" description="Basic and acidic residues" evidence="3">
    <location>
        <begin position="33"/>
        <end position="42"/>
    </location>
</feature>
<feature type="modified residue" description="N,N,N-trimethylalanine" evidence="1">
    <location>
        <position position="2"/>
    </location>
</feature>
<feature type="sequence variant" id="VAR_077959" description="In ATFB18; dbSNP:rs886037778." evidence="4">
    <original>E</original>
    <variation>K</variation>
    <location>
        <position position="11"/>
    </location>
</feature>
<feature type="sequence variant" id="VAR_050458" description="In dbSNP:rs16941677.">
    <original>N</original>
    <variation>Y</variation>
    <location>
        <position position="186"/>
    </location>
</feature>
<feature type="sequence conflict" description="In Ref. 2; AAA59891." evidence="5" ref="2">
    <original>D</original>
    <variation>E</variation>
    <location>
        <position position="51"/>
    </location>
</feature>
<feature type="sequence conflict" description="In Ref. 2; AAA59891." evidence="5" ref="2">
    <original>F</original>
    <variation>L</variation>
    <location>
        <position position="56"/>
    </location>
</feature>
<feature type="sequence conflict" description="In Ref. 9; AAA59856." evidence="5" ref="9">
    <original>I</original>
    <variation>V</variation>
    <location>
        <position position="119"/>
    </location>
</feature>
<feature type="sequence conflict" description="In Ref. 2; AAA59891." evidence="5" ref="2">
    <original>D</original>
    <variation>E</variation>
    <location>
        <position position="143"/>
    </location>
</feature>
<feature type="sequence conflict" description="In Ref. 2; AAA59891." evidence="5" ref="2">
    <original>V</original>
    <variation>D</variation>
    <location>
        <position position="150"/>
    </location>
</feature>
<feature type="sequence conflict" description="In Ref. 9; AAA59856." evidence="5" ref="9">
    <original>A</original>
    <variation>V</variation>
    <location>
        <position position="181"/>
    </location>
</feature>
<feature type="sequence conflict" description="In Ref. 9; AAA59856." evidence="5" ref="9">
    <original>I</original>
    <variation>V</variation>
    <location>
        <position position="185"/>
    </location>
</feature>
<proteinExistence type="evidence at protein level"/>
<organism>
    <name type="scientific">Homo sapiens</name>
    <name type="common">Human</name>
    <dbReference type="NCBI Taxonomy" id="9606"/>
    <lineage>
        <taxon>Eukaryota</taxon>
        <taxon>Metazoa</taxon>
        <taxon>Chordata</taxon>
        <taxon>Craniata</taxon>
        <taxon>Vertebrata</taxon>
        <taxon>Euteleostomi</taxon>
        <taxon>Mammalia</taxon>
        <taxon>Eutheria</taxon>
        <taxon>Euarchontoglires</taxon>
        <taxon>Primates</taxon>
        <taxon>Haplorrhini</taxon>
        <taxon>Catarrhini</taxon>
        <taxon>Hominidae</taxon>
        <taxon>Homo</taxon>
    </lineage>
</organism>
<name>MYL4_HUMAN</name>
<gene>
    <name type="primary">MYL4</name>
    <name type="synonym">MLC1</name>
    <name type="ORF">PRO1957</name>
</gene>
<evidence type="ECO:0000250" key="1">
    <source>
        <dbReference type="UniProtKB" id="P85100"/>
    </source>
</evidence>
<evidence type="ECO:0000255" key="2">
    <source>
        <dbReference type="PROSITE-ProRule" id="PRU00448"/>
    </source>
</evidence>
<evidence type="ECO:0000256" key="3">
    <source>
        <dbReference type="SAM" id="MobiDB-lite"/>
    </source>
</evidence>
<evidence type="ECO:0000269" key="4">
    <source>
    </source>
</evidence>
<evidence type="ECO:0000305" key="5"/>
<comment type="function">
    <text>Regulatory light chain of myosin. Does not bind calcium.</text>
</comment>
<comment type="subunit">
    <text>Myosin is a hexamer of 2 heavy chains and 4 light chains.</text>
</comment>
<comment type="disease" evidence="4">
    <disease id="DI-04898">
        <name>Atrial fibrillation, familial, 18</name>
        <acronym>ATFB18</acronym>
        <description>A familial form of atrial fibrillation, a common sustained cardiac rhythm disturbance. Atrial fibrillation is characterized by disorganized atrial electrical activity and ineffective atrial contraction promoting blood stasis in the atria and reduces ventricular filling. It can result in palpitations, syncope, thromboembolic stroke, and congestive heart failure.</description>
        <dbReference type="MIM" id="617280"/>
    </disease>
    <text>The disease is caused by variants affecting the gene represented in this entry.</text>
</comment>
<accession>P12829</accession>
<accession>D3DXJ7</accession>
<accession>P11783</accession>